<sequence length="34" mass="3841">MSDINTARLPYVVFMSFIPPCVNDDIQVVLTRGE</sequence>
<proteinExistence type="inferred from homology"/>
<reference key="1">
    <citation type="journal article" date="2007" name="Proc. Natl. Acad. Sci. U.S.A.">
        <title>Gene family encoding the major toxins of lethal Amanita mushrooms.</title>
        <authorList>
            <person name="Hallen H.E."/>
            <person name="Luo H."/>
            <person name="Scott-Craig J.S."/>
            <person name="Walton J.D."/>
        </authorList>
    </citation>
    <scope>NUCLEOTIDE SEQUENCE [GENOMIC DNA]</scope>
    <scope>FUNCTION</scope>
</reference>
<comment type="function">
    <text evidence="4">Probable toxin that belongs to the MSDIN-like toxin family responsible for a large number of food poisoning cases and deaths (PubMed:18025465).</text>
</comment>
<comment type="PTM">
    <text evidence="1 4">Processed by the macrocyclase-peptidase enzyme POPB to yield a toxic cyclic decapeptide (PubMed:18025465). POPB first removes 10 residues from the N-terminus (By similarity). Conformational trapping of the remaining peptide forces the enzyme to release this intermediate rather than proceed to macrocyclization (By similarity). The enzyme rebinds the remaining peptide in a different conformation and catalyzes macrocyclization of the N-terminal 10 residues (By similarity).</text>
</comment>
<comment type="similarity">
    <text evidence="3">Belongs to the MSDIN fungal toxin family.</text>
</comment>
<organism>
    <name type="scientific">Amanita bisporigera</name>
    <name type="common">Destroying angel</name>
    <dbReference type="NCBI Taxonomy" id="87325"/>
    <lineage>
        <taxon>Eukaryota</taxon>
        <taxon>Fungi</taxon>
        <taxon>Dikarya</taxon>
        <taxon>Basidiomycota</taxon>
        <taxon>Agaricomycotina</taxon>
        <taxon>Agaricomycetes</taxon>
        <taxon>Agaricomycetidae</taxon>
        <taxon>Agaricales</taxon>
        <taxon>Pluteineae</taxon>
        <taxon>Amanitaceae</taxon>
        <taxon>Amanita</taxon>
    </lineage>
</organism>
<feature type="propeptide" id="PRO_0000443647" evidence="4">
    <location>
        <begin position="1"/>
        <end position="10"/>
    </location>
</feature>
<feature type="peptide" id="PRO_0000443648" description="Toxin MSD5" evidence="4">
    <location>
        <begin position="11"/>
        <end position="20"/>
    </location>
</feature>
<feature type="propeptide" id="PRO_0000443649" evidence="4">
    <location>
        <begin position="21"/>
        <end position="34"/>
    </location>
</feature>
<feature type="cross-link" description="Cyclopeptide (Tyr-Pro)" evidence="4">
    <location>
        <begin position="11"/>
        <end position="20"/>
    </location>
</feature>
<feature type="non-terminal residue" evidence="3">
    <location>
        <position position="34"/>
    </location>
</feature>
<gene>
    <name evidence="2" type="primary">MSD5</name>
</gene>
<name>MSD5_AMABI</name>
<keyword id="KW-0800">Toxin</keyword>
<accession>A8W7N3</accession>
<evidence type="ECO:0000250" key="1">
    <source>
        <dbReference type="UniProtKB" id="A0A067SLB9"/>
    </source>
</evidence>
<evidence type="ECO:0000303" key="2">
    <source>
    </source>
</evidence>
<evidence type="ECO:0000305" key="3"/>
<evidence type="ECO:0000305" key="4">
    <source>
    </source>
</evidence>
<protein>
    <recommendedName>
        <fullName evidence="2">MSDIN-like toxin proprotein 5</fullName>
    </recommendedName>
    <component>
        <recommendedName>
            <fullName evidence="2">Toxin MSD5</fullName>
        </recommendedName>
    </component>
</protein>
<dbReference type="EMBL" id="EU196148">
    <property type="protein sequence ID" value="ABW87777.1"/>
    <property type="molecule type" value="Genomic_DNA"/>
</dbReference>
<dbReference type="SMR" id="A8W7N3"/>
<dbReference type="GO" id="GO:0090729">
    <property type="term" value="F:toxin activity"/>
    <property type="evidence" value="ECO:0007669"/>
    <property type="project" value="UniProtKB-KW"/>
</dbReference>
<dbReference type="InterPro" id="IPR027582">
    <property type="entry name" value="Amanitin/phalloidin"/>
</dbReference>
<dbReference type="NCBIfam" id="TIGR04309">
    <property type="entry name" value="amanitin"/>
    <property type="match status" value="1"/>
</dbReference>